<gene>
    <name type="ordered locus">At5g16900</name>
    <name type="ORF">F2K13.50</name>
</gene>
<keyword id="KW-0067">ATP-binding</keyword>
<keyword id="KW-0325">Glycoprotein</keyword>
<keyword id="KW-0418">Kinase</keyword>
<keyword id="KW-0433">Leucine-rich repeat</keyword>
<keyword id="KW-0472">Membrane</keyword>
<keyword id="KW-0547">Nucleotide-binding</keyword>
<keyword id="KW-0597">Phosphoprotein</keyword>
<keyword id="KW-0675">Receptor</keyword>
<keyword id="KW-1185">Reference proteome</keyword>
<keyword id="KW-0677">Repeat</keyword>
<keyword id="KW-0723">Serine/threonine-protein kinase</keyword>
<keyword id="KW-0732">Signal</keyword>
<keyword id="KW-0808">Transferase</keyword>
<keyword id="KW-0812">Transmembrane</keyword>
<keyword id="KW-1133">Transmembrane helix</keyword>
<sequence length="866" mass="97252">MEDRHRYLFFIFAIIHYVQAQQGFISLDCGLPSNEPPYIEPVTGLVFSSDADHIPSGISGRIQKNLEAVHIKPYLFLRYFPDGLRNCYTLDVLQNRRYMIKAVFVYGNYDGYNDYPSFDLYLGPNKWVRVDLEGKVNGSVEEIIHIPSSNSLQICLVKTGNSLPFISALELRLLRNDTYVVQDVSLKHLFRRYYRQSDRLIRYPDDVYDRVWSPFFLPEWTQITTSLDVNNSNNYEPPKAALTSAATPGDNGTRLTIIWTLDNPDEQIHLYVHFAELEPVGENTDEALRTLFTRTFYFVVNGKISYDESITPLDLAVSTVETVVNKCDGGNCSLQLVRSEASPGVRVPLVNAMEAFTAIKFPHSETNPDDVISIKVIQATYELSRVDWQGDPCLPQQFLWTGLNCSYMNMSTSPRIISLDLSSHKLTGKIVPDIQNLTQLQKLDLSNNKLTGGVPEFLANMKSLLFINLSNNNLVGSIPQALLDRKNLKLEFEGNPKLCATGPCNSSSGNKETTVIAPVAAAIAIFIAVLVLIIVFIKKRPSSIRALHPSRANLSLENKKRRITYSEILLMTNNFERVIGEGGFGVVYHGYLNDSEQVAVKVLSPSSSQGYKEFKAEVELLLRVHHINLVSLVGYCDEQAHLALIYEYMANGDLKSHLSGKHGDCVLKWENRLSIAVETALGLEYLHSGCKPLMVHRDVKSMNILLDEHFQAKLADFGLSRSFSVGEESHVSTGVVGTPGYLDPEYYRTYRLTEKSDVYSFGIVLLEIITNQPVLEQANENRHIAERVRTMLTRSDISTIVDPNLIGEYDSGSVRKALKLAMSCVDPSPVARPDMSHVVQELKQCIKSENLRLRTGLNQVIDSKSS</sequence>
<protein>
    <recommendedName>
        <fullName>Probable LRR receptor-like serine/threonine-protein kinase At5g16900</fullName>
        <ecNumber>2.7.11.1</ecNumber>
    </recommendedName>
</protein>
<organism>
    <name type="scientific">Arabidopsis thaliana</name>
    <name type="common">Mouse-ear cress</name>
    <dbReference type="NCBI Taxonomy" id="3702"/>
    <lineage>
        <taxon>Eukaryota</taxon>
        <taxon>Viridiplantae</taxon>
        <taxon>Streptophyta</taxon>
        <taxon>Embryophyta</taxon>
        <taxon>Tracheophyta</taxon>
        <taxon>Spermatophyta</taxon>
        <taxon>Magnoliopsida</taxon>
        <taxon>eudicotyledons</taxon>
        <taxon>Gunneridae</taxon>
        <taxon>Pentapetalae</taxon>
        <taxon>rosids</taxon>
        <taxon>malvids</taxon>
        <taxon>Brassicales</taxon>
        <taxon>Brassicaceae</taxon>
        <taxon>Camelineae</taxon>
        <taxon>Arabidopsis</taxon>
    </lineage>
</organism>
<name>Y5169_ARATH</name>
<reference key="1">
    <citation type="journal article" date="2000" name="Nature">
        <title>Sequence and analysis of chromosome 5 of the plant Arabidopsis thaliana.</title>
        <authorList>
            <person name="Tabata S."/>
            <person name="Kaneko T."/>
            <person name="Nakamura Y."/>
            <person name="Kotani H."/>
            <person name="Kato T."/>
            <person name="Asamizu E."/>
            <person name="Miyajima N."/>
            <person name="Sasamoto S."/>
            <person name="Kimura T."/>
            <person name="Hosouchi T."/>
            <person name="Kawashima K."/>
            <person name="Kohara M."/>
            <person name="Matsumoto M."/>
            <person name="Matsuno A."/>
            <person name="Muraki A."/>
            <person name="Nakayama S."/>
            <person name="Nakazaki N."/>
            <person name="Naruo K."/>
            <person name="Okumura S."/>
            <person name="Shinpo S."/>
            <person name="Takeuchi C."/>
            <person name="Wada T."/>
            <person name="Watanabe A."/>
            <person name="Yamada M."/>
            <person name="Yasuda M."/>
            <person name="Sato S."/>
            <person name="de la Bastide M."/>
            <person name="Huang E."/>
            <person name="Spiegel L."/>
            <person name="Gnoj L."/>
            <person name="O'Shaughnessy A."/>
            <person name="Preston R."/>
            <person name="Habermann K."/>
            <person name="Murray J."/>
            <person name="Johnson D."/>
            <person name="Rohlfing T."/>
            <person name="Nelson J."/>
            <person name="Stoneking T."/>
            <person name="Pepin K."/>
            <person name="Spieth J."/>
            <person name="Sekhon M."/>
            <person name="Armstrong J."/>
            <person name="Becker M."/>
            <person name="Belter E."/>
            <person name="Cordum H."/>
            <person name="Cordes M."/>
            <person name="Courtney L."/>
            <person name="Courtney W."/>
            <person name="Dante M."/>
            <person name="Du H."/>
            <person name="Edwards J."/>
            <person name="Fryman J."/>
            <person name="Haakensen B."/>
            <person name="Lamar E."/>
            <person name="Latreille P."/>
            <person name="Leonard S."/>
            <person name="Meyer R."/>
            <person name="Mulvaney E."/>
            <person name="Ozersky P."/>
            <person name="Riley A."/>
            <person name="Strowmatt C."/>
            <person name="Wagner-McPherson C."/>
            <person name="Wollam A."/>
            <person name="Yoakum M."/>
            <person name="Bell M."/>
            <person name="Dedhia N."/>
            <person name="Parnell L."/>
            <person name="Shah R."/>
            <person name="Rodriguez M."/>
            <person name="Hoon See L."/>
            <person name="Vil D."/>
            <person name="Baker J."/>
            <person name="Kirchoff K."/>
            <person name="Toth K."/>
            <person name="King L."/>
            <person name="Bahret A."/>
            <person name="Miller B."/>
            <person name="Marra M.A."/>
            <person name="Martienssen R."/>
            <person name="McCombie W.R."/>
            <person name="Wilson R.K."/>
            <person name="Murphy G."/>
            <person name="Bancroft I."/>
            <person name="Volckaert G."/>
            <person name="Wambutt R."/>
            <person name="Duesterhoeft A."/>
            <person name="Stiekema W."/>
            <person name="Pohl T."/>
            <person name="Entian K.-D."/>
            <person name="Terryn N."/>
            <person name="Hartley N."/>
            <person name="Bent E."/>
            <person name="Johnson S."/>
            <person name="Langham S.-A."/>
            <person name="McCullagh B."/>
            <person name="Robben J."/>
            <person name="Grymonprez B."/>
            <person name="Zimmermann W."/>
            <person name="Ramsperger U."/>
            <person name="Wedler H."/>
            <person name="Balke K."/>
            <person name="Wedler E."/>
            <person name="Peters S."/>
            <person name="van Staveren M."/>
            <person name="Dirkse W."/>
            <person name="Mooijman P."/>
            <person name="Klein Lankhorst R."/>
            <person name="Weitzenegger T."/>
            <person name="Bothe G."/>
            <person name="Rose M."/>
            <person name="Hauf J."/>
            <person name="Berneiser S."/>
            <person name="Hempel S."/>
            <person name="Feldpausch M."/>
            <person name="Lamberth S."/>
            <person name="Villarroel R."/>
            <person name="Gielen J."/>
            <person name="Ardiles W."/>
            <person name="Bents O."/>
            <person name="Lemcke K."/>
            <person name="Kolesov G."/>
            <person name="Mayer K.F.X."/>
            <person name="Rudd S."/>
            <person name="Schoof H."/>
            <person name="Schueller C."/>
            <person name="Zaccaria P."/>
            <person name="Mewes H.-W."/>
            <person name="Bevan M."/>
            <person name="Fransz P.F."/>
        </authorList>
    </citation>
    <scope>NUCLEOTIDE SEQUENCE [LARGE SCALE GENOMIC DNA]</scope>
    <source>
        <strain>cv. Columbia</strain>
    </source>
</reference>
<reference key="2">
    <citation type="journal article" date="2017" name="Plant J.">
        <title>Araport11: a complete reannotation of the Arabidopsis thaliana reference genome.</title>
        <authorList>
            <person name="Cheng C.Y."/>
            <person name="Krishnakumar V."/>
            <person name="Chan A.P."/>
            <person name="Thibaud-Nissen F."/>
            <person name="Schobel S."/>
            <person name="Town C.D."/>
        </authorList>
    </citation>
    <scope>GENOME REANNOTATION</scope>
    <source>
        <strain>cv. Columbia</strain>
    </source>
</reference>
<reference key="3">
    <citation type="journal article" date="2010" name="BMC Genomics">
        <title>Genome-wide cloning and sequence analysis of leucine-rich repeat receptor-like protein kinase genes in Arabidopsis thaliana.</title>
        <authorList>
            <person name="Gou X."/>
            <person name="He K."/>
            <person name="Yang H."/>
            <person name="Yuan T."/>
            <person name="Lin H."/>
            <person name="Clouse S.D."/>
            <person name="Li J."/>
        </authorList>
    </citation>
    <scope>NUCLEOTIDE SEQUENCE [LARGE SCALE MRNA]</scope>
    <source>
        <strain>cv. Columbia</strain>
    </source>
</reference>
<accession>C0LGT5</accession>
<accession>Q9LFL1</accession>
<dbReference type="EC" id="2.7.11.1"/>
<dbReference type="EMBL" id="AL391141">
    <property type="protein sequence ID" value="CAC01703.1"/>
    <property type="status" value="ALT_SEQ"/>
    <property type="molecule type" value="Genomic_DNA"/>
</dbReference>
<dbReference type="EMBL" id="CP002688">
    <property type="protein sequence ID" value="AED92356.1"/>
    <property type="molecule type" value="Genomic_DNA"/>
</dbReference>
<dbReference type="EMBL" id="CP002688">
    <property type="protein sequence ID" value="ANM70370.1"/>
    <property type="molecule type" value="Genomic_DNA"/>
</dbReference>
<dbReference type="EMBL" id="FJ708779">
    <property type="protein sequence ID" value="ACN59370.1"/>
    <property type="molecule type" value="mRNA"/>
</dbReference>
<dbReference type="PIR" id="T51545">
    <property type="entry name" value="T51545"/>
</dbReference>
<dbReference type="RefSeq" id="NP_001318574.1">
    <property type="nucleotide sequence ID" value="NM_001343470.1"/>
</dbReference>
<dbReference type="RefSeq" id="NP_197192.2">
    <property type="nucleotide sequence ID" value="NM_121696.3"/>
</dbReference>
<dbReference type="SMR" id="C0LGT5"/>
<dbReference type="BioGRID" id="16829">
    <property type="interactions" value="38"/>
</dbReference>
<dbReference type="FunCoup" id="C0LGT5">
    <property type="interactions" value="1"/>
</dbReference>
<dbReference type="IntAct" id="C0LGT5">
    <property type="interactions" value="39"/>
</dbReference>
<dbReference type="STRING" id="3702.C0LGT5"/>
<dbReference type="GlyGen" id="C0LGT5">
    <property type="glycosylation" value="11 sites"/>
</dbReference>
<dbReference type="PaxDb" id="3702-AT5G16900.1"/>
<dbReference type="EnsemblPlants" id="AT5G16900.1">
    <property type="protein sequence ID" value="AT5G16900.1"/>
    <property type="gene ID" value="AT5G16900"/>
</dbReference>
<dbReference type="EnsemblPlants" id="AT5G16900.3">
    <property type="protein sequence ID" value="AT5G16900.3"/>
    <property type="gene ID" value="AT5G16900"/>
</dbReference>
<dbReference type="GeneID" id="831553"/>
<dbReference type="Gramene" id="AT5G16900.1">
    <property type="protein sequence ID" value="AT5G16900.1"/>
    <property type="gene ID" value="AT5G16900"/>
</dbReference>
<dbReference type="Gramene" id="AT5G16900.3">
    <property type="protein sequence ID" value="AT5G16900.3"/>
    <property type="gene ID" value="AT5G16900"/>
</dbReference>
<dbReference type="KEGG" id="ath:AT5G16900"/>
<dbReference type="Araport" id="AT5G16900"/>
<dbReference type="TAIR" id="AT5G16900"/>
<dbReference type="eggNOG" id="ENOG502QQCZ">
    <property type="taxonomic scope" value="Eukaryota"/>
</dbReference>
<dbReference type="HOGENOM" id="CLU_000288_41_1_1"/>
<dbReference type="InParanoid" id="C0LGT5"/>
<dbReference type="PhylomeDB" id="C0LGT5"/>
<dbReference type="PRO" id="PR:C0LGT5"/>
<dbReference type="Proteomes" id="UP000006548">
    <property type="component" value="Chromosome 5"/>
</dbReference>
<dbReference type="ExpressionAtlas" id="C0LGT5">
    <property type="expression patterns" value="baseline and differential"/>
</dbReference>
<dbReference type="GO" id="GO:0016020">
    <property type="term" value="C:membrane"/>
    <property type="evidence" value="ECO:0007669"/>
    <property type="project" value="UniProtKB-SubCell"/>
</dbReference>
<dbReference type="GO" id="GO:0005524">
    <property type="term" value="F:ATP binding"/>
    <property type="evidence" value="ECO:0007669"/>
    <property type="project" value="UniProtKB-KW"/>
</dbReference>
<dbReference type="GO" id="GO:0106310">
    <property type="term" value="F:protein serine kinase activity"/>
    <property type="evidence" value="ECO:0007669"/>
    <property type="project" value="RHEA"/>
</dbReference>
<dbReference type="GO" id="GO:0004674">
    <property type="term" value="F:protein serine/threonine kinase activity"/>
    <property type="evidence" value="ECO:0007669"/>
    <property type="project" value="UniProtKB-KW"/>
</dbReference>
<dbReference type="CDD" id="cd14066">
    <property type="entry name" value="STKc_IRAK"/>
    <property type="match status" value="1"/>
</dbReference>
<dbReference type="FunFam" id="3.80.10.10:FF:000129">
    <property type="entry name" value="Leucine-rich repeat receptor-like kinase"/>
    <property type="match status" value="1"/>
</dbReference>
<dbReference type="FunFam" id="3.30.200.20:FF:000394">
    <property type="entry name" value="Leucine-rich repeat receptor-like protein kinase"/>
    <property type="match status" value="1"/>
</dbReference>
<dbReference type="FunFam" id="1.10.510.10:FF:000146">
    <property type="entry name" value="LRR receptor-like serine/threonine-protein kinase IOS1"/>
    <property type="match status" value="1"/>
</dbReference>
<dbReference type="Gene3D" id="3.30.200.20">
    <property type="entry name" value="Phosphorylase Kinase, domain 1"/>
    <property type="match status" value="1"/>
</dbReference>
<dbReference type="Gene3D" id="3.80.10.10">
    <property type="entry name" value="Ribonuclease Inhibitor"/>
    <property type="match status" value="1"/>
</dbReference>
<dbReference type="Gene3D" id="1.10.510.10">
    <property type="entry name" value="Transferase(Phosphotransferase) domain 1"/>
    <property type="match status" value="1"/>
</dbReference>
<dbReference type="InterPro" id="IPR011009">
    <property type="entry name" value="Kinase-like_dom_sf"/>
</dbReference>
<dbReference type="InterPro" id="IPR025875">
    <property type="entry name" value="Leu-rich_rpt_4"/>
</dbReference>
<dbReference type="InterPro" id="IPR032675">
    <property type="entry name" value="LRR_dom_sf"/>
</dbReference>
<dbReference type="InterPro" id="IPR024788">
    <property type="entry name" value="Malectin-like_Carb-bd_dom"/>
</dbReference>
<dbReference type="InterPro" id="IPR000719">
    <property type="entry name" value="Prot_kinase_dom"/>
</dbReference>
<dbReference type="InterPro" id="IPR017441">
    <property type="entry name" value="Protein_kinase_ATP_BS"/>
</dbReference>
<dbReference type="InterPro" id="IPR008271">
    <property type="entry name" value="Ser/Thr_kinase_AS"/>
</dbReference>
<dbReference type="PANTHER" id="PTHR45631:SF183">
    <property type="entry name" value="BNAC02G06920D PROTEIN"/>
    <property type="match status" value="1"/>
</dbReference>
<dbReference type="PANTHER" id="PTHR45631">
    <property type="entry name" value="OS07G0107800 PROTEIN-RELATED"/>
    <property type="match status" value="1"/>
</dbReference>
<dbReference type="Pfam" id="PF12799">
    <property type="entry name" value="LRR_4"/>
    <property type="match status" value="1"/>
</dbReference>
<dbReference type="Pfam" id="PF12819">
    <property type="entry name" value="Malectin_like"/>
    <property type="match status" value="1"/>
</dbReference>
<dbReference type="Pfam" id="PF00069">
    <property type="entry name" value="Pkinase"/>
    <property type="match status" value="1"/>
</dbReference>
<dbReference type="SMART" id="SM00220">
    <property type="entry name" value="S_TKc"/>
    <property type="match status" value="1"/>
</dbReference>
<dbReference type="SUPFAM" id="SSF52058">
    <property type="entry name" value="L domain-like"/>
    <property type="match status" value="1"/>
</dbReference>
<dbReference type="SUPFAM" id="SSF56112">
    <property type="entry name" value="Protein kinase-like (PK-like)"/>
    <property type="match status" value="1"/>
</dbReference>
<dbReference type="PROSITE" id="PS00107">
    <property type="entry name" value="PROTEIN_KINASE_ATP"/>
    <property type="match status" value="1"/>
</dbReference>
<dbReference type="PROSITE" id="PS50011">
    <property type="entry name" value="PROTEIN_KINASE_DOM"/>
    <property type="match status" value="1"/>
</dbReference>
<dbReference type="PROSITE" id="PS00108">
    <property type="entry name" value="PROTEIN_KINASE_ST"/>
    <property type="match status" value="1"/>
</dbReference>
<feature type="signal peptide" evidence="2">
    <location>
        <begin position="1"/>
        <end position="20"/>
    </location>
</feature>
<feature type="chain" id="PRO_0000387561" description="Probable LRR receptor-like serine/threonine-protein kinase At5g16900">
    <location>
        <begin position="21"/>
        <end position="866"/>
    </location>
</feature>
<feature type="topological domain" description="Extracellular" evidence="2">
    <location>
        <begin position="21"/>
        <end position="515"/>
    </location>
</feature>
<feature type="transmembrane region" description="Helical" evidence="2">
    <location>
        <begin position="516"/>
        <end position="536"/>
    </location>
</feature>
<feature type="topological domain" description="Cytoplasmic" evidence="2">
    <location>
        <begin position="537"/>
        <end position="866"/>
    </location>
</feature>
<feature type="repeat" description="LRR 1">
    <location>
        <begin position="415"/>
        <end position="438"/>
    </location>
</feature>
<feature type="repeat" description="LRR 2">
    <location>
        <begin position="439"/>
        <end position="461"/>
    </location>
</feature>
<feature type="repeat" description="LRR 3">
    <location>
        <begin position="463"/>
        <end position="485"/>
    </location>
</feature>
<feature type="domain" description="Protein kinase" evidence="3">
    <location>
        <begin position="573"/>
        <end position="846"/>
    </location>
</feature>
<feature type="active site" description="Proton acceptor" evidence="3 4">
    <location>
        <position position="698"/>
    </location>
</feature>
<feature type="binding site" evidence="3">
    <location>
        <begin position="579"/>
        <end position="587"/>
    </location>
    <ligand>
        <name>ATP</name>
        <dbReference type="ChEBI" id="CHEBI:30616"/>
    </ligand>
</feature>
<feature type="binding site" evidence="3">
    <location>
        <position position="601"/>
    </location>
    <ligand>
        <name>ATP</name>
        <dbReference type="ChEBI" id="CHEBI:30616"/>
    </ligand>
</feature>
<feature type="modified residue" description="Phosphothreonine" evidence="1">
    <location>
        <position position="564"/>
    </location>
</feature>
<feature type="modified residue" description="Phosphotyrosine" evidence="1">
    <location>
        <position position="646"/>
    </location>
</feature>
<feature type="modified residue" description="Phosphoserine" evidence="1">
    <location>
        <position position="732"/>
    </location>
</feature>
<feature type="modified residue" description="Phosphothreonine" evidence="1">
    <location>
        <position position="733"/>
    </location>
</feature>
<feature type="modified residue" description="Phosphothreonine" evidence="1">
    <location>
        <position position="738"/>
    </location>
</feature>
<feature type="modified residue" description="Phosphotyrosine" evidence="1">
    <location>
        <position position="746"/>
    </location>
</feature>
<feature type="glycosylation site" description="N-linked (GlcNAc...) asparagine" evidence="2">
    <location>
        <position position="137"/>
    </location>
</feature>
<feature type="glycosylation site" description="N-linked (GlcNAc...) asparagine" evidence="2">
    <location>
        <position position="176"/>
    </location>
</feature>
<feature type="glycosylation site" description="N-linked (GlcNAc...) asparagine" evidence="2">
    <location>
        <position position="230"/>
    </location>
</feature>
<feature type="glycosylation site" description="N-linked (GlcNAc...) asparagine" evidence="2">
    <location>
        <position position="251"/>
    </location>
</feature>
<feature type="glycosylation site" description="N-linked (GlcNAc...) asparagine" evidence="2">
    <location>
        <position position="331"/>
    </location>
</feature>
<feature type="glycosylation site" description="N-linked (GlcNAc...) asparagine" evidence="2">
    <location>
        <position position="404"/>
    </location>
</feature>
<feature type="glycosylation site" description="N-linked (GlcNAc...) asparagine" evidence="2">
    <location>
        <position position="409"/>
    </location>
</feature>
<feature type="glycosylation site" description="N-linked (GlcNAc...) asparagine" evidence="2">
    <location>
        <position position="436"/>
    </location>
</feature>
<feature type="glycosylation site" description="N-linked (GlcNAc...) asparagine" evidence="2">
    <location>
        <position position="468"/>
    </location>
</feature>
<feature type="glycosylation site" description="N-linked (GlcNAc...) asparagine" evidence="2">
    <location>
        <position position="505"/>
    </location>
</feature>
<comment type="catalytic activity">
    <reaction>
        <text>L-seryl-[protein] + ATP = O-phospho-L-seryl-[protein] + ADP + H(+)</text>
        <dbReference type="Rhea" id="RHEA:17989"/>
        <dbReference type="Rhea" id="RHEA-COMP:9863"/>
        <dbReference type="Rhea" id="RHEA-COMP:11604"/>
        <dbReference type="ChEBI" id="CHEBI:15378"/>
        <dbReference type="ChEBI" id="CHEBI:29999"/>
        <dbReference type="ChEBI" id="CHEBI:30616"/>
        <dbReference type="ChEBI" id="CHEBI:83421"/>
        <dbReference type="ChEBI" id="CHEBI:456216"/>
        <dbReference type="EC" id="2.7.11.1"/>
    </reaction>
</comment>
<comment type="catalytic activity">
    <reaction>
        <text>L-threonyl-[protein] + ATP = O-phospho-L-threonyl-[protein] + ADP + H(+)</text>
        <dbReference type="Rhea" id="RHEA:46608"/>
        <dbReference type="Rhea" id="RHEA-COMP:11060"/>
        <dbReference type="Rhea" id="RHEA-COMP:11605"/>
        <dbReference type="ChEBI" id="CHEBI:15378"/>
        <dbReference type="ChEBI" id="CHEBI:30013"/>
        <dbReference type="ChEBI" id="CHEBI:30616"/>
        <dbReference type="ChEBI" id="CHEBI:61977"/>
        <dbReference type="ChEBI" id="CHEBI:456216"/>
        <dbReference type="EC" id="2.7.11.1"/>
    </reaction>
</comment>
<comment type="interaction">
    <interactant intactId="EBI-16954237">
        <id>C0LGT5</id>
    </interactant>
    <interactant intactId="EBI-16934827">
        <id>Q8W4S5</id>
        <label>At5g63710</label>
    </interactant>
    <organismsDiffer>false</organismsDiffer>
    <experiments>2</experiments>
</comment>
<comment type="subcellular location">
    <subcellularLocation>
        <location evidence="5">Membrane</location>
        <topology evidence="5">Single-pass type I membrane protein</topology>
    </subcellularLocation>
</comment>
<comment type="similarity">
    <text evidence="3">Belongs to the protein kinase superfamily. Ser/Thr protein kinase family.</text>
</comment>
<comment type="sequence caution" evidence="5">
    <conflict type="erroneous gene model prediction">
        <sequence resource="EMBL-CDS" id="CAC01703"/>
    </conflict>
</comment>
<evidence type="ECO:0000250" key="1">
    <source>
        <dbReference type="UniProtKB" id="O48814"/>
    </source>
</evidence>
<evidence type="ECO:0000255" key="2"/>
<evidence type="ECO:0000255" key="3">
    <source>
        <dbReference type="PROSITE-ProRule" id="PRU00159"/>
    </source>
</evidence>
<evidence type="ECO:0000255" key="4">
    <source>
        <dbReference type="PROSITE-ProRule" id="PRU10027"/>
    </source>
</evidence>
<evidence type="ECO:0000305" key="5"/>
<proteinExistence type="evidence at protein level"/>